<organism>
    <name type="scientific">Rickettsia africae (strain ESF-5)</name>
    <dbReference type="NCBI Taxonomy" id="347255"/>
    <lineage>
        <taxon>Bacteria</taxon>
        <taxon>Pseudomonadati</taxon>
        <taxon>Pseudomonadota</taxon>
        <taxon>Alphaproteobacteria</taxon>
        <taxon>Rickettsiales</taxon>
        <taxon>Rickettsiaceae</taxon>
        <taxon>Rickettsieae</taxon>
        <taxon>Rickettsia</taxon>
        <taxon>spotted fever group</taxon>
    </lineage>
</organism>
<dbReference type="EC" id="2.5.1.7" evidence="1"/>
<dbReference type="EMBL" id="CP001612">
    <property type="protein sequence ID" value="ACP53674.1"/>
    <property type="molecule type" value="Genomic_DNA"/>
</dbReference>
<dbReference type="RefSeq" id="WP_012719863.1">
    <property type="nucleotide sequence ID" value="NC_012633.1"/>
</dbReference>
<dbReference type="SMR" id="C3PP14"/>
<dbReference type="KEGG" id="raf:RAF_ORF0800"/>
<dbReference type="HOGENOM" id="CLU_027387_0_0_5"/>
<dbReference type="UniPathway" id="UPA00219"/>
<dbReference type="Proteomes" id="UP000002305">
    <property type="component" value="Chromosome"/>
</dbReference>
<dbReference type="GO" id="GO:0005737">
    <property type="term" value="C:cytoplasm"/>
    <property type="evidence" value="ECO:0007669"/>
    <property type="project" value="UniProtKB-SubCell"/>
</dbReference>
<dbReference type="GO" id="GO:0008760">
    <property type="term" value="F:UDP-N-acetylglucosamine 1-carboxyvinyltransferase activity"/>
    <property type="evidence" value="ECO:0007669"/>
    <property type="project" value="UniProtKB-UniRule"/>
</dbReference>
<dbReference type="GO" id="GO:0051301">
    <property type="term" value="P:cell division"/>
    <property type="evidence" value="ECO:0007669"/>
    <property type="project" value="UniProtKB-KW"/>
</dbReference>
<dbReference type="GO" id="GO:0071555">
    <property type="term" value="P:cell wall organization"/>
    <property type="evidence" value="ECO:0007669"/>
    <property type="project" value="UniProtKB-KW"/>
</dbReference>
<dbReference type="GO" id="GO:0009252">
    <property type="term" value="P:peptidoglycan biosynthetic process"/>
    <property type="evidence" value="ECO:0007669"/>
    <property type="project" value="UniProtKB-UniRule"/>
</dbReference>
<dbReference type="GO" id="GO:0008360">
    <property type="term" value="P:regulation of cell shape"/>
    <property type="evidence" value="ECO:0007669"/>
    <property type="project" value="UniProtKB-KW"/>
</dbReference>
<dbReference type="GO" id="GO:0019277">
    <property type="term" value="P:UDP-N-acetylgalactosamine biosynthetic process"/>
    <property type="evidence" value="ECO:0007669"/>
    <property type="project" value="InterPro"/>
</dbReference>
<dbReference type="CDD" id="cd01555">
    <property type="entry name" value="UdpNAET"/>
    <property type="match status" value="1"/>
</dbReference>
<dbReference type="FunFam" id="3.65.10.10:FF:000001">
    <property type="entry name" value="UDP-N-acetylglucosamine 1-carboxyvinyltransferase"/>
    <property type="match status" value="1"/>
</dbReference>
<dbReference type="Gene3D" id="3.65.10.10">
    <property type="entry name" value="Enolpyruvate transferase domain"/>
    <property type="match status" value="2"/>
</dbReference>
<dbReference type="HAMAP" id="MF_00111">
    <property type="entry name" value="MurA"/>
    <property type="match status" value="1"/>
</dbReference>
<dbReference type="InterPro" id="IPR001986">
    <property type="entry name" value="Enolpyruvate_Tfrase_dom"/>
</dbReference>
<dbReference type="InterPro" id="IPR036968">
    <property type="entry name" value="Enolpyruvate_Tfrase_sf"/>
</dbReference>
<dbReference type="InterPro" id="IPR050068">
    <property type="entry name" value="MurA_subfamily"/>
</dbReference>
<dbReference type="InterPro" id="IPR013792">
    <property type="entry name" value="RNA3'P_cycl/enolpyr_Trfase_a/b"/>
</dbReference>
<dbReference type="InterPro" id="IPR005750">
    <property type="entry name" value="UDP_GlcNAc_COvinyl_MurA"/>
</dbReference>
<dbReference type="NCBIfam" id="TIGR01072">
    <property type="entry name" value="murA"/>
    <property type="match status" value="1"/>
</dbReference>
<dbReference type="NCBIfam" id="NF006873">
    <property type="entry name" value="PRK09369.1"/>
    <property type="match status" value="1"/>
</dbReference>
<dbReference type="PANTHER" id="PTHR43783">
    <property type="entry name" value="UDP-N-ACETYLGLUCOSAMINE 1-CARBOXYVINYLTRANSFERASE"/>
    <property type="match status" value="1"/>
</dbReference>
<dbReference type="PANTHER" id="PTHR43783:SF1">
    <property type="entry name" value="UDP-N-ACETYLGLUCOSAMINE 1-CARBOXYVINYLTRANSFERASE"/>
    <property type="match status" value="1"/>
</dbReference>
<dbReference type="Pfam" id="PF00275">
    <property type="entry name" value="EPSP_synthase"/>
    <property type="match status" value="1"/>
</dbReference>
<dbReference type="SUPFAM" id="SSF55205">
    <property type="entry name" value="EPT/RTPC-like"/>
    <property type="match status" value="1"/>
</dbReference>
<reference key="1">
    <citation type="journal article" date="2009" name="BMC Genomics">
        <title>Analysis of the Rickettsia africae genome reveals that virulence acquisition in Rickettsia species may be explained by genome reduction.</title>
        <authorList>
            <person name="Fournier P.-E."/>
            <person name="El Karkouri K."/>
            <person name="Leroy Q."/>
            <person name="Robert C."/>
            <person name="Giumelli B."/>
            <person name="Renesto P."/>
            <person name="Socolovschi C."/>
            <person name="Parola P."/>
            <person name="Audic S."/>
            <person name="Raoult D."/>
        </authorList>
    </citation>
    <scope>NUCLEOTIDE SEQUENCE [LARGE SCALE GENOMIC DNA]</scope>
    <source>
        <strain>ESF-5</strain>
    </source>
</reference>
<sequence>MHKLIIHGGTPLKGSINISGAKNAVLPIMAASILTDKLHITNVPKLTDVSTMKDLLRSHGADIEIIEHQDEFELIIDTKNINNFTADYEIVRKMRASIWVLGPLLTKYGKAKVSLPGGCAIGARQVDLHIAVLKAMGAEIEIEDGYINASSKGRLKGTHFVFDKVSVGATINAILAAVLAEGETVLFNCGREPEIVDLCNCLITMGADIAGIGTSEITIKGKDSLNKASYKVLSDRIEAGTYMFAAAITKGDVKICRIDYHIVKNIALKLIETGIKVVPINNGVQVTYEGKLNSVDLETNPYPGFATDLQAQFMSLMTLSSGVSMITENIFENRFMHVPELCRMGADIVVRGNKAVVRGVEMLKGAEVMASDLRASVSLILAGLSTSSKTVLHRIYHLDRGFQDLEKKLSNCGADIKRV</sequence>
<protein>
    <recommendedName>
        <fullName evidence="1">UDP-N-acetylglucosamine 1-carboxyvinyltransferase</fullName>
        <ecNumber evidence="1">2.5.1.7</ecNumber>
    </recommendedName>
    <alternativeName>
        <fullName evidence="1">Enoylpyruvate transferase</fullName>
    </alternativeName>
    <alternativeName>
        <fullName evidence="1">UDP-N-acetylglucosamine enolpyruvyl transferase</fullName>
        <shortName evidence="1">EPT</shortName>
    </alternativeName>
</protein>
<keyword id="KW-0131">Cell cycle</keyword>
<keyword id="KW-0132">Cell division</keyword>
<keyword id="KW-0133">Cell shape</keyword>
<keyword id="KW-0961">Cell wall biogenesis/degradation</keyword>
<keyword id="KW-0963">Cytoplasm</keyword>
<keyword id="KW-0573">Peptidoglycan synthesis</keyword>
<keyword id="KW-0670">Pyruvate</keyword>
<keyword id="KW-0808">Transferase</keyword>
<comment type="function">
    <text evidence="1">Cell wall formation. Adds enolpyruvyl to UDP-N-acetylglucosamine.</text>
</comment>
<comment type="catalytic activity">
    <reaction evidence="1">
        <text>phosphoenolpyruvate + UDP-N-acetyl-alpha-D-glucosamine = UDP-N-acetyl-3-O-(1-carboxyvinyl)-alpha-D-glucosamine + phosphate</text>
        <dbReference type="Rhea" id="RHEA:18681"/>
        <dbReference type="ChEBI" id="CHEBI:43474"/>
        <dbReference type="ChEBI" id="CHEBI:57705"/>
        <dbReference type="ChEBI" id="CHEBI:58702"/>
        <dbReference type="ChEBI" id="CHEBI:68483"/>
        <dbReference type="EC" id="2.5.1.7"/>
    </reaction>
</comment>
<comment type="pathway">
    <text evidence="1">Cell wall biogenesis; peptidoglycan biosynthesis.</text>
</comment>
<comment type="subcellular location">
    <subcellularLocation>
        <location evidence="1">Cytoplasm</location>
    </subcellularLocation>
</comment>
<comment type="similarity">
    <text evidence="1">Belongs to the EPSP synthase family. MurA subfamily.</text>
</comment>
<feature type="chain" id="PRO_1000202933" description="UDP-N-acetylglucosamine 1-carboxyvinyltransferase">
    <location>
        <begin position="1"/>
        <end position="419"/>
    </location>
</feature>
<feature type="active site" description="Proton donor" evidence="1">
    <location>
        <position position="119"/>
    </location>
</feature>
<feature type="binding site" evidence="1">
    <location>
        <begin position="22"/>
        <end position="23"/>
    </location>
    <ligand>
        <name>phosphoenolpyruvate</name>
        <dbReference type="ChEBI" id="CHEBI:58702"/>
    </ligand>
</feature>
<feature type="binding site" evidence="1">
    <location>
        <position position="95"/>
    </location>
    <ligand>
        <name>UDP-N-acetyl-alpha-D-glucosamine</name>
        <dbReference type="ChEBI" id="CHEBI:57705"/>
    </ligand>
</feature>
<feature type="binding site" evidence="1">
    <location>
        <begin position="164"/>
        <end position="167"/>
    </location>
    <ligand>
        <name>UDP-N-acetyl-alpha-D-glucosamine</name>
        <dbReference type="ChEBI" id="CHEBI:57705"/>
    </ligand>
</feature>
<feature type="binding site" evidence="1">
    <location>
        <position position="308"/>
    </location>
    <ligand>
        <name>UDP-N-acetyl-alpha-D-glucosamine</name>
        <dbReference type="ChEBI" id="CHEBI:57705"/>
    </ligand>
</feature>
<feature type="binding site" evidence="1">
    <location>
        <position position="330"/>
    </location>
    <ligand>
        <name>UDP-N-acetyl-alpha-D-glucosamine</name>
        <dbReference type="ChEBI" id="CHEBI:57705"/>
    </ligand>
</feature>
<feature type="modified residue" description="2-(S-cysteinyl)pyruvic acid O-phosphothioketal" evidence="1">
    <location>
        <position position="119"/>
    </location>
</feature>
<name>MURA_RICAE</name>
<proteinExistence type="inferred from homology"/>
<gene>
    <name evidence="1" type="primary">murA</name>
    <name type="ordered locus">RAF_ORF0800</name>
</gene>
<accession>C3PP14</accession>
<evidence type="ECO:0000255" key="1">
    <source>
        <dbReference type="HAMAP-Rule" id="MF_00111"/>
    </source>
</evidence>